<feature type="chain" id="PRO_1000197699" description="Succinate--CoA ligase [ADP-forming] subunit beta">
    <location>
        <begin position="1"/>
        <end position="398"/>
    </location>
</feature>
<feature type="domain" description="ATP-grasp" evidence="1">
    <location>
        <begin position="9"/>
        <end position="254"/>
    </location>
</feature>
<feature type="binding site" evidence="1">
    <location>
        <position position="46"/>
    </location>
    <ligand>
        <name>ATP</name>
        <dbReference type="ChEBI" id="CHEBI:30616"/>
    </ligand>
</feature>
<feature type="binding site" evidence="1">
    <location>
        <begin position="53"/>
        <end position="55"/>
    </location>
    <ligand>
        <name>ATP</name>
        <dbReference type="ChEBI" id="CHEBI:30616"/>
    </ligand>
</feature>
<feature type="binding site" evidence="1">
    <location>
        <position position="109"/>
    </location>
    <ligand>
        <name>ATP</name>
        <dbReference type="ChEBI" id="CHEBI:30616"/>
    </ligand>
</feature>
<feature type="binding site" evidence="1">
    <location>
        <position position="112"/>
    </location>
    <ligand>
        <name>ATP</name>
        <dbReference type="ChEBI" id="CHEBI:30616"/>
    </ligand>
</feature>
<feature type="binding site" evidence="1">
    <location>
        <position position="117"/>
    </location>
    <ligand>
        <name>ATP</name>
        <dbReference type="ChEBI" id="CHEBI:30616"/>
    </ligand>
</feature>
<feature type="binding site" evidence="1">
    <location>
        <position position="209"/>
    </location>
    <ligand>
        <name>Mg(2+)</name>
        <dbReference type="ChEBI" id="CHEBI:18420"/>
    </ligand>
</feature>
<feature type="binding site" evidence="1">
    <location>
        <position position="223"/>
    </location>
    <ligand>
        <name>Mg(2+)</name>
        <dbReference type="ChEBI" id="CHEBI:18420"/>
    </ligand>
</feature>
<feature type="binding site" evidence="1">
    <location>
        <position position="274"/>
    </location>
    <ligand>
        <name>substrate</name>
        <note>ligand shared with subunit alpha</note>
    </ligand>
</feature>
<feature type="binding site" evidence="1">
    <location>
        <begin position="331"/>
        <end position="333"/>
    </location>
    <ligand>
        <name>substrate</name>
        <note>ligand shared with subunit alpha</note>
    </ligand>
</feature>
<keyword id="KW-0067">ATP-binding</keyword>
<keyword id="KW-0436">Ligase</keyword>
<keyword id="KW-0460">Magnesium</keyword>
<keyword id="KW-0479">Metal-binding</keyword>
<keyword id="KW-0547">Nucleotide-binding</keyword>
<keyword id="KW-0816">Tricarboxylic acid cycle</keyword>
<comment type="function">
    <text evidence="1">Succinyl-CoA synthetase functions in the citric acid cycle (TCA), coupling the hydrolysis of succinyl-CoA to the synthesis of either ATP or GTP and thus represents the only step of substrate-level phosphorylation in the TCA. The beta subunit provides nucleotide specificity of the enzyme and binds the substrate succinate, while the binding sites for coenzyme A and phosphate are found in the alpha subunit.</text>
</comment>
<comment type="catalytic activity">
    <reaction evidence="1">
        <text>succinate + ATP + CoA = succinyl-CoA + ADP + phosphate</text>
        <dbReference type="Rhea" id="RHEA:17661"/>
        <dbReference type="ChEBI" id="CHEBI:30031"/>
        <dbReference type="ChEBI" id="CHEBI:30616"/>
        <dbReference type="ChEBI" id="CHEBI:43474"/>
        <dbReference type="ChEBI" id="CHEBI:57287"/>
        <dbReference type="ChEBI" id="CHEBI:57292"/>
        <dbReference type="ChEBI" id="CHEBI:456216"/>
        <dbReference type="EC" id="6.2.1.5"/>
    </reaction>
    <physiologicalReaction direction="right-to-left" evidence="1">
        <dbReference type="Rhea" id="RHEA:17663"/>
    </physiologicalReaction>
</comment>
<comment type="catalytic activity">
    <reaction evidence="1">
        <text>GTP + succinate + CoA = succinyl-CoA + GDP + phosphate</text>
        <dbReference type="Rhea" id="RHEA:22120"/>
        <dbReference type="ChEBI" id="CHEBI:30031"/>
        <dbReference type="ChEBI" id="CHEBI:37565"/>
        <dbReference type="ChEBI" id="CHEBI:43474"/>
        <dbReference type="ChEBI" id="CHEBI:57287"/>
        <dbReference type="ChEBI" id="CHEBI:57292"/>
        <dbReference type="ChEBI" id="CHEBI:58189"/>
    </reaction>
    <physiologicalReaction direction="right-to-left" evidence="1">
        <dbReference type="Rhea" id="RHEA:22122"/>
    </physiologicalReaction>
</comment>
<comment type="cofactor">
    <cofactor evidence="1">
        <name>Mg(2+)</name>
        <dbReference type="ChEBI" id="CHEBI:18420"/>
    </cofactor>
    <text evidence="1">Binds 1 Mg(2+) ion per subunit.</text>
</comment>
<comment type="pathway">
    <text evidence="1">Carbohydrate metabolism; tricarboxylic acid cycle; succinate from succinyl-CoA (ligase route): step 1/1.</text>
</comment>
<comment type="subunit">
    <text evidence="1">Heterotetramer of two alpha and two beta subunits.</text>
</comment>
<comment type="similarity">
    <text evidence="1">Belongs to the succinate/malate CoA ligase beta subunit family.</text>
</comment>
<accession>C0RFH1</accession>
<gene>
    <name evidence="1" type="primary">sucC</name>
    <name type="ordered locus">BMEA_A1983</name>
</gene>
<organism>
    <name type="scientific">Brucella melitensis biotype 2 (strain ATCC 23457)</name>
    <dbReference type="NCBI Taxonomy" id="546272"/>
    <lineage>
        <taxon>Bacteria</taxon>
        <taxon>Pseudomonadati</taxon>
        <taxon>Pseudomonadota</taxon>
        <taxon>Alphaproteobacteria</taxon>
        <taxon>Hyphomicrobiales</taxon>
        <taxon>Brucellaceae</taxon>
        <taxon>Brucella/Ochrobactrum group</taxon>
        <taxon>Brucella</taxon>
    </lineage>
</organism>
<reference key="1">
    <citation type="submission" date="2009-03" db="EMBL/GenBank/DDBJ databases">
        <title>Brucella melitensis ATCC 23457 whole genome shotgun sequencing project.</title>
        <authorList>
            <person name="Setubal J.C."/>
            <person name="Boyle S."/>
            <person name="Crasta O.R."/>
            <person name="Gillespie J.J."/>
            <person name="Kenyon R.W."/>
            <person name="Lu J."/>
            <person name="Mane S."/>
            <person name="Nagrani S."/>
            <person name="Shallom J.M."/>
            <person name="Shallom S."/>
            <person name="Shukla M."/>
            <person name="Snyder E.E."/>
            <person name="Sobral B.W."/>
            <person name="Wattam A.R."/>
            <person name="Will R."/>
            <person name="Williams K."/>
            <person name="Yoo H."/>
            <person name="Munk C."/>
            <person name="Tapia R."/>
            <person name="Han C."/>
            <person name="Detter J.C."/>
            <person name="Bruce D."/>
            <person name="Brettin T.S."/>
        </authorList>
    </citation>
    <scope>NUCLEOTIDE SEQUENCE [LARGE SCALE GENOMIC DNA]</scope>
    <source>
        <strain>ATCC 23457</strain>
    </source>
</reference>
<dbReference type="EC" id="6.2.1.5" evidence="1"/>
<dbReference type="EMBL" id="CP001488">
    <property type="protein sequence ID" value="ACO01643.1"/>
    <property type="molecule type" value="Genomic_DNA"/>
</dbReference>
<dbReference type="RefSeq" id="WP_002964994.1">
    <property type="nucleotide sequence ID" value="NC_012441.1"/>
</dbReference>
<dbReference type="SMR" id="C0RFH1"/>
<dbReference type="GeneID" id="97534788"/>
<dbReference type="KEGG" id="bmi:BMEA_A1983"/>
<dbReference type="HOGENOM" id="CLU_037430_0_2_5"/>
<dbReference type="UniPathway" id="UPA00223">
    <property type="reaction ID" value="UER00999"/>
</dbReference>
<dbReference type="Proteomes" id="UP000001748">
    <property type="component" value="Chromosome I"/>
</dbReference>
<dbReference type="GO" id="GO:0005829">
    <property type="term" value="C:cytosol"/>
    <property type="evidence" value="ECO:0007669"/>
    <property type="project" value="TreeGrafter"/>
</dbReference>
<dbReference type="GO" id="GO:0042709">
    <property type="term" value="C:succinate-CoA ligase complex"/>
    <property type="evidence" value="ECO:0007669"/>
    <property type="project" value="TreeGrafter"/>
</dbReference>
<dbReference type="GO" id="GO:0005524">
    <property type="term" value="F:ATP binding"/>
    <property type="evidence" value="ECO:0007669"/>
    <property type="project" value="UniProtKB-UniRule"/>
</dbReference>
<dbReference type="GO" id="GO:0000287">
    <property type="term" value="F:magnesium ion binding"/>
    <property type="evidence" value="ECO:0007669"/>
    <property type="project" value="UniProtKB-UniRule"/>
</dbReference>
<dbReference type="GO" id="GO:0004775">
    <property type="term" value="F:succinate-CoA ligase (ADP-forming) activity"/>
    <property type="evidence" value="ECO:0007669"/>
    <property type="project" value="UniProtKB-UniRule"/>
</dbReference>
<dbReference type="GO" id="GO:0004776">
    <property type="term" value="F:succinate-CoA ligase (GDP-forming) activity"/>
    <property type="evidence" value="ECO:0007669"/>
    <property type="project" value="RHEA"/>
</dbReference>
<dbReference type="GO" id="GO:0006104">
    <property type="term" value="P:succinyl-CoA metabolic process"/>
    <property type="evidence" value="ECO:0007669"/>
    <property type="project" value="TreeGrafter"/>
</dbReference>
<dbReference type="GO" id="GO:0006099">
    <property type="term" value="P:tricarboxylic acid cycle"/>
    <property type="evidence" value="ECO:0007669"/>
    <property type="project" value="UniProtKB-UniRule"/>
</dbReference>
<dbReference type="FunFam" id="3.30.1490.20:FF:000002">
    <property type="entry name" value="Succinate--CoA ligase [ADP-forming] subunit beta"/>
    <property type="match status" value="1"/>
</dbReference>
<dbReference type="FunFam" id="3.30.470.20:FF:000002">
    <property type="entry name" value="Succinate--CoA ligase [ADP-forming] subunit beta"/>
    <property type="match status" value="1"/>
</dbReference>
<dbReference type="FunFam" id="3.40.50.261:FF:000001">
    <property type="entry name" value="Succinate--CoA ligase [ADP-forming] subunit beta"/>
    <property type="match status" value="1"/>
</dbReference>
<dbReference type="Gene3D" id="3.30.1490.20">
    <property type="entry name" value="ATP-grasp fold, A domain"/>
    <property type="match status" value="1"/>
</dbReference>
<dbReference type="Gene3D" id="3.30.470.20">
    <property type="entry name" value="ATP-grasp fold, B domain"/>
    <property type="match status" value="1"/>
</dbReference>
<dbReference type="Gene3D" id="3.40.50.261">
    <property type="entry name" value="Succinyl-CoA synthetase domains"/>
    <property type="match status" value="1"/>
</dbReference>
<dbReference type="HAMAP" id="MF_00558">
    <property type="entry name" value="Succ_CoA_beta"/>
    <property type="match status" value="1"/>
</dbReference>
<dbReference type="InterPro" id="IPR011761">
    <property type="entry name" value="ATP-grasp"/>
</dbReference>
<dbReference type="InterPro" id="IPR013650">
    <property type="entry name" value="ATP-grasp_succ-CoA_synth-type"/>
</dbReference>
<dbReference type="InterPro" id="IPR013815">
    <property type="entry name" value="ATP_grasp_subdomain_1"/>
</dbReference>
<dbReference type="InterPro" id="IPR017866">
    <property type="entry name" value="Succ-CoA_synthase_bsu_CS"/>
</dbReference>
<dbReference type="InterPro" id="IPR005811">
    <property type="entry name" value="SUCC_ACL_C"/>
</dbReference>
<dbReference type="InterPro" id="IPR005809">
    <property type="entry name" value="Succ_CoA_ligase-like_bsu"/>
</dbReference>
<dbReference type="InterPro" id="IPR016102">
    <property type="entry name" value="Succinyl-CoA_synth-like"/>
</dbReference>
<dbReference type="NCBIfam" id="NF001913">
    <property type="entry name" value="PRK00696.1"/>
    <property type="match status" value="1"/>
</dbReference>
<dbReference type="NCBIfam" id="TIGR01016">
    <property type="entry name" value="sucCoAbeta"/>
    <property type="match status" value="1"/>
</dbReference>
<dbReference type="PANTHER" id="PTHR11815:SF10">
    <property type="entry name" value="SUCCINATE--COA LIGASE [GDP-FORMING] SUBUNIT BETA, MITOCHONDRIAL"/>
    <property type="match status" value="1"/>
</dbReference>
<dbReference type="PANTHER" id="PTHR11815">
    <property type="entry name" value="SUCCINYL-COA SYNTHETASE BETA CHAIN"/>
    <property type="match status" value="1"/>
</dbReference>
<dbReference type="Pfam" id="PF08442">
    <property type="entry name" value="ATP-grasp_2"/>
    <property type="match status" value="1"/>
</dbReference>
<dbReference type="Pfam" id="PF00549">
    <property type="entry name" value="Ligase_CoA"/>
    <property type="match status" value="1"/>
</dbReference>
<dbReference type="PIRSF" id="PIRSF001554">
    <property type="entry name" value="SucCS_beta"/>
    <property type="match status" value="1"/>
</dbReference>
<dbReference type="SUPFAM" id="SSF56059">
    <property type="entry name" value="Glutathione synthetase ATP-binding domain-like"/>
    <property type="match status" value="1"/>
</dbReference>
<dbReference type="SUPFAM" id="SSF52210">
    <property type="entry name" value="Succinyl-CoA synthetase domains"/>
    <property type="match status" value="1"/>
</dbReference>
<dbReference type="PROSITE" id="PS50975">
    <property type="entry name" value="ATP_GRASP"/>
    <property type="match status" value="1"/>
</dbReference>
<dbReference type="PROSITE" id="PS01217">
    <property type="entry name" value="SUCCINYL_COA_LIG_3"/>
    <property type="match status" value="1"/>
</dbReference>
<proteinExistence type="inferred from homology"/>
<name>SUCC_BRUMB</name>
<protein>
    <recommendedName>
        <fullName evidence="1">Succinate--CoA ligase [ADP-forming] subunit beta</fullName>
        <ecNumber evidence="1">6.2.1.5</ecNumber>
    </recommendedName>
    <alternativeName>
        <fullName evidence="1">Succinyl-CoA synthetase subunit beta</fullName>
        <shortName evidence="1">SCS-beta</shortName>
    </alternativeName>
</protein>
<evidence type="ECO:0000255" key="1">
    <source>
        <dbReference type="HAMAP-Rule" id="MF_00558"/>
    </source>
</evidence>
<sequence>MNIHEYQAKRLLHTYGAPIANGVAVYSVEQAEEWAKTLPGPLYVVKSQIHAGGRGKGKFKELPADAKGGVRLAKSVEEVVANAKEMLGNTLVTKQTGEAGKQVNRLYIEDGADIERELYLSILIDRSVGRPAFVVSTEGGMDIEAVAEETPEKIVTVAIDPAKGVTDEDANKLADALKLEGGAREDGLKLFPILYKAFTEKDMSLLEINPLIVMTNGRVRVLDAKVSFDNNALFRHPDIVELRDLTEEDPKEIEASKYDLAYVALDGNIGCMVNGAGLAMATMDIIKLYGAEPANFLDVGGGASKEKVTAAFKIITADPAVEGILVNIFGGIMKCDVIAEGVIAAVKEVGLKVPLVVRLEGTNVELGKKIINESGLNVISADDLDDAAQKIVAAVKGN</sequence>